<keyword id="KW-0223">Dioxygenase</keyword>
<keyword id="KW-0408">Iron</keyword>
<keyword id="KW-0479">Metal-binding</keyword>
<keyword id="KW-0560">Oxidoreductase</keyword>
<keyword id="KW-1185">Reference proteome</keyword>
<evidence type="ECO:0000255" key="1">
    <source>
        <dbReference type="PROSITE-ProRule" id="PRU00805"/>
    </source>
</evidence>
<evidence type="ECO:0000269" key="2">
    <source>
    </source>
</evidence>
<evidence type="ECO:0000303" key="3">
    <source>
    </source>
</evidence>
<evidence type="ECO:0000305" key="4"/>
<evidence type="ECO:0000305" key="5">
    <source>
    </source>
</evidence>
<gene>
    <name type="ORF">AFUA_1G01000</name>
</gene>
<reference key="1">
    <citation type="journal article" date="2005" name="Nature">
        <title>Genomic sequence of the pathogenic and allergenic filamentous fungus Aspergillus fumigatus.</title>
        <authorList>
            <person name="Nierman W.C."/>
            <person name="Pain A."/>
            <person name="Anderson M.J."/>
            <person name="Wortman J.R."/>
            <person name="Kim H.S."/>
            <person name="Arroyo J."/>
            <person name="Berriman M."/>
            <person name="Abe K."/>
            <person name="Archer D.B."/>
            <person name="Bermejo C."/>
            <person name="Bennett J.W."/>
            <person name="Bowyer P."/>
            <person name="Chen D."/>
            <person name="Collins M."/>
            <person name="Coulsen R."/>
            <person name="Davies R."/>
            <person name="Dyer P.S."/>
            <person name="Farman M.L."/>
            <person name="Fedorova N."/>
            <person name="Fedorova N.D."/>
            <person name="Feldblyum T.V."/>
            <person name="Fischer R."/>
            <person name="Fosker N."/>
            <person name="Fraser A."/>
            <person name="Garcia J.L."/>
            <person name="Garcia M.J."/>
            <person name="Goble A."/>
            <person name="Goldman G.H."/>
            <person name="Gomi K."/>
            <person name="Griffith-Jones S."/>
            <person name="Gwilliam R."/>
            <person name="Haas B.J."/>
            <person name="Haas H."/>
            <person name="Harris D.E."/>
            <person name="Horiuchi H."/>
            <person name="Huang J."/>
            <person name="Humphray S."/>
            <person name="Jimenez J."/>
            <person name="Keller N."/>
            <person name="Khouri H."/>
            <person name="Kitamoto K."/>
            <person name="Kobayashi T."/>
            <person name="Konzack S."/>
            <person name="Kulkarni R."/>
            <person name="Kumagai T."/>
            <person name="Lafton A."/>
            <person name="Latge J.-P."/>
            <person name="Li W."/>
            <person name="Lord A."/>
            <person name="Lu C."/>
            <person name="Majoros W.H."/>
            <person name="May G.S."/>
            <person name="Miller B.L."/>
            <person name="Mohamoud Y."/>
            <person name="Molina M."/>
            <person name="Monod M."/>
            <person name="Mouyna I."/>
            <person name="Mulligan S."/>
            <person name="Murphy L.D."/>
            <person name="O'Neil S."/>
            <person name="Paulsen I."/>
            <person name="Penalva M.A."/>
            <person name="Pertea M."/>
            <person name="Price C."/>
            <person name="Pritchard B.L."/>
            <person name="Quail M.A."/>
            <person name="Rabbinowitsch E."/>
            <person name="Rawlins N."/>
            <person name="Rajandream M.A."/>
            <person name="Reichard U."/>
            <person name="Renauld H."/>
            <person name="Robson G.D."/>
            <person name="Rodriguez de Cordoba S."/>
            <person name="Rodriguez-Pena J.M."/>
            <person name="Ronning C.M."/>
            <person name="Rutter S."/>
            <person name="Salzberg S.L."/>
            <person name="Sanchez M."/>
            <person name="Sanchez-Ferrero J.C."/>
            <person name="Saunders D."/>
            <person name="Seeger K."/>
            <person name="Squares R."/>
            <person name="Squares S."/>
            <person name="Takeuchi M."/>
            <person name="Tekaia F."/>
            <person name="Turner G."/>
            <person name="Vazquez de Aldana C.R."/>
            <person name="Weidman J."/>
            <person name="White O."/>
            <person name="Woodward J.R."/>
            <person name="Yu J.-H."/>
            <person name="Fraser C.M."/>
            <person name="Galagan J.E."/>
            <person name="Asai K."/>
            <person name="Machida M."/>
            <person name="Hall N."/>
            <person name="Barrell B.G."/>
            <person name="Denning D.W."/>
        </authorList>
    </citation>
    <scope>NUCLEOTIDE SEQUENCE [LARGE SCALE GENOMIC DNA]</scope>
    <source>
        <strain>ATCC MYA-4609 / CBS 101355 / FGSC A1100 / Af293</strain>
    </source>
</reference>
<reference key="2">
    <citation type="journal article" date="2020" name="Elife">
        <title>Targeted induction of a silent fungal gene cluster encoding the bacteria-specific germination inhibitor fumigermin.</title>
        <authorList>
            <person name="Stroe M.C."/>
            <person name="Netzker T."/>
            <person name="Scherlach K."/>
            <person name="Krueger T."/>
            <person name="Hertweck C."/>
            <person name="Valiante V."/>
            <person name="Brakhage A.A."/>
        </authorList>
    </citation>
    <scope>FUNCTION</scope>
    <scope>INDUCTION</scope>
</reference>
<feature type="chain" id="PRO_0000449928" description="2-oxoglutarate-dependent dioxygenase AFUA_1G01000">
    <location>
        <begin position="1"/>
        <end position="385"/>
    </location>
</feature>
<feature type="domain" description="Fe2OG dioxygenase" evidence="1">
    <location>
        <begin position="203"/>
        <end position="327"/>
    </location>
</feature>
<feature type="binding site" evidence="1">
    <location>
        <position position="230"/>
    </location>
    <ligand>
        <name>Fe cation</name>
        <dbReference type="ChEBI" id="CHEBI:24875"/>
    </ligand>
</feature>
<feature type="binding site" evidence="1">
    <location>
        <position position="232"/>
    </location>
    <ligand>
        <name>Fe cation</name>
        <dbReference type="ChEBI" id="CHEBI:24875"/>
    </ligand>
</feature>
<feature type="binding site" evidence="1">
    <location>
        <position position="304"/>
    </location>
    <ligand>
        <name>Fe cation</name>
        <dbReference type="ChEBI" id="CHEBI:24875"/>
    </ligand>
</feature>
<feature type="binding site" evidence="1">
    <location>
        <position position="318"/>
    </location>
    <ligand>
        <name>2-oxoglutarate</name>
        <dbReference type="ChEBI" id="CHEBI:16810"/>
    </ligand>
</feature>
<accession>Q4WKX0</accession>
<organism>
    <name type="scientific">Aspergillus fumigatus (strain ATCC MYA-4609 / CBS 101355 / FGSC A1100 / Af293)</name>
    <name type="common">Neosartorya fumigata</name>
    <dbReference type="NCBI Taxonomy" id="330879"/>
    <lineage>
        <taxon>Eukaryota</taxon>
        <taxon>Fungi</taxon>
        <taxon>Dikarya</taxon>
        <taxon>Ascomycota</taxon>
        <taxon>Pezizomycotina</taxon>
        <taxon>Eurotiomycetes</taxon>
        <taxon>Eurotiomycetidae</taxon>
        <taxon>Eurotiales</taxon>
        <taxon>Aspergillaceae</taxon>
        <taxon>Aspergillus</taxon>
        <taxon>Aspergillus subgen. Fumigati</taxon>
    </lineage>
</organism>
<protein>
    <recommendedName>
        <fullName>2-oxoglutarate-dependent dioxygenase AFUA_1G01000</fullName>
        <ecNumber evidence="1">1.14.11.-</ecNumber>
    </recommendedName>
    <alternativeName>
        <fullName evidence="3">Fumigermin biosynthesis cluster protein AFUA_1G01000</fullName>
    </alternativeName>
</protein>
<dbReference type="EC" id="1.14.11.-" evidence="1"/>
<dbReference type="EMBL" id="AAHF01000007">
    <property type="protein sequence ID" value="EAL87812.1"/>
    <property type="molecule type" value="Genomic_DNA"/>
</dbReference>
<dbReference type="RefSeq" id="XP_749850.1">
    <property type="nucleotide sequence ID" value="XM_744757.1"/>
</dbReference>
<dbReference type="SMR" id="Q4WKX0"/>
<dbReference type="EnsemblFungi" id="EAL87812">
    <property type="protein sequence ID" value="EAL87812"/>
    <property type="gene ID" value="AFUA_1G01000"/>
</dbReference>
<dbReference type="GeneID" id="3507447"/>
<dbReference type="KEGG" id="afm:AFUA_1G01000"/>
<dbReference type="VEuPathDB" id="FungiDB:Afu1g01000"/>
<dbReference type="HOGENOM" id="CLU_010119_4_0_1"/>
<dbReference type="InParanoid" id="Q4WKX0"/>
<dbReference type="OMA" id="PRYSETI"/>
<dbReference type="OrthoDB" id="288590at2759"/>
<dbReference type="Proteomes" id="UP000002530">
    <property type="component" value="Chromosome 1"/>
</dbReference>
<dbReference type="GO" id="GO:0016706">
    <property type="term" value="F:2-oxoglutarate-dependent dioxygenase activity"/>
    <property type="evidence" value="ECO:0000318"/>
    <property type="project" value="GO_Central"/>
</dbReference>
<dbReference type="GO" id="GO:0046872">
    <property type="term" value="F:metal ion binding"/>
    <property type="evidence" value="ECO:0007669"/>
    <property type="project" value="UniProtKB-KW"/>
</dbReference>
<dbReference type="FunFam" id="2.60.120.330:FF:000072">
    <property type="entry name" value="Oxidoreductase"/>
    <property type="match status" value="1"/>
</dbReference>
<dbReference type="Gene3D" id="2.60.120.330">
    <property type="entry name" value="B-lactam Antibiotic, Isopenicillin N Synthase, Chain"/>
    <property type="match status" value="1"/>
</dbReference>
<dbReference type="InterPro" id="IPR044861">
    <property type="entry name" value="IPNS-like_FE2OG_OXY"/>
</dbReference>
<dbReference type="InterPro" id="IPR027443">
    <property type="entry name" value="IPNS-like_sf"/>
</dbReference>
<dbReference type="InterPro" id="IPR050231">
    <property type="entry name" value="Iron_ascorbate_oxido_reductase"/>
</dbReference>
<dbReference type="InterPro" id="IPR005123">
    <property type="entry name" value="Oxoglu/Fe-dep_dioxygenase_dom"/>
</dbReference>
<dbReference type="PANTHER" id="PTHR47990">
    <property type="entry name" value="2-OXOGLUTARATE (2OG) AND FE(II)-DEPENDENT OXYGENASE SUPERFAMILY PROTEIN-RELATED"/>
    <property type="match status" value="1"/>
</dbReference>
<dbReference type="Pfam" id="PF03171">
    <property type="entry name" value="2OG-FeII_Oxy"/>
    <property type="match status" value="1"/>
</dbReference>
<dbReference type="SUPFAM" id="SSF51197">
    <property type="entry name" value="Clavaminate synthase-like"/>
    <property type="match status" value="1"/>
</dbReference>
<dbReference type="PROSITE" id="PS51471">
    <property type="entry name" value="FE2OG_OXY"/>
    <property type="match status" value="1"/>
</dbReference>
<proteinExistence type="evidence at transcript level"/>
<comment type="function">
    <text evidence="2 5">2-oxoglutarate-dependent dioxygenase; part of the gene cluster that mediates the biosynthesis of fumigermin that inhibits germination of spores of the inducing S.rapamycinicus, and thus helps the fungus to defend resources in the shared habitat against a bacterial competitor (PubMed:32083553). The partially reducing polyketide synthase fngA alone is sufficient for the production of fumigermin (PubMed:32083553). FgnA catalyzes the condensation of 3 malonyl-CoA units to an acetyl-CoA starter, and 3 methylations to yield fumigermin (PubMed:32083553). It is remarkable that the five cluster genes including fgnA are conserved in distantly related fungi, supporting the assumption of a fumigermin cluster; it is thus possible that originally all five genes were functional, but that the genes encoding tailoring enzymes became inactive from mutations, similar to the case of the fgnA gene in strains A1163 and Af293 (Probable).</text>
</comment>
<comment type="cofactor">
    <cofactor evidence="1">
        <name>Fe(2+)</name>
        <dbReference type="ChEBI" id="CHEBI:29033"/>
    </cofactor>
    <text evidence="1">Binds 1 Fe(2+) ion per subunit.</text>
</comment>
<comment type="induction">
    <text evidence="2">Expression is up-regulated during co-cultivation of A.fumigatus with Streptomyces rapamycinicus that triggersthe production of the polyketide fumigermin during the bacterial-fungal interaction.</text>
</comment>
<comment type="similarity">
    <text evidence="4">Belongs to the iron/ascorbate-dependent oxidoreductase family.</text>
</comment>
<name>FGNB_ASPFU</name>
<sequence length="385" mass="42636">MTVNGKDIDSPNAQYVAAGIDMSDLFPAPFPTNVKTVHLETLSLAKLLQRDEDELRRIYENCKDPGFFQLDLTDDEQGVQLLQDAVDCARLMKQLLPNMSVEEKRMYKQHSRVGVYSKGYQVYDVLPNGQPKYNETVNFPMTEMLGYGDSTVDLPDWLSPHRELFQRTMRSGNKIANIVLAALEVGLQVPRGALTDAHRIQDPSDDFLRLLRYPGLQPGQPRDDLCFPAHKDFTSLGILFTWLGGLQLLASASAPGVTSGTMTGPLDIAEDAWRWVQPVPGTAIVNVGNALEILTNKALTSGLHRVVRAPGEQLPFDRYSVLVGTRPANSFPMKPLQSPQISPVLDPAAAEIATMTSGQWGTHNIGSFNNWVKARTERQEVLIIP</sequence>